<keyword id="KW-0997">Cell inner membrane</keyword>
<keyword id="KW-1003">Cell membrane</keyword>
<keyword id="KW-0444">Lipid biosynthesis</keyword>
<keyword id="KW-0443">Lipid metabolism</keyword>
<keyword id="KW-0472">Membrane</keyword>
<keyword id="KW-0594">Phospholipid biosynthesis</keyword>
<keyword id="KW-1208">Phospholipid metabolism</keyword>
<keyword id="KW-0808">Transferase</keyword>
<keyword id="KW-0812">Transmembrane</keyword>
<keyword id="KW-1133">Transmembrane helix</keyword>
<sequence length="193" mass="20861">MAFIISIIIAYLLGSLSFAVIVAKLMKLPDPRTTGSGNAGATNMLRVGGRQAAFYVLLGDAAKGLIAVLIARFLNVQGVSLAFVGLVAVLGHLFPVYFKFRGGKGVATMMGVLLGLSFWIGLFVIATWVIVVSIFRYSSVAALVSAVAAPIYTIIAGRTDYLFPVLIIAILIIWKHWENFQRLRKGTEDKVKL</sequence>
<name>PLSY_COXBN</name>
<evidence type="ECO:0000255" key="1">
    <source>
        <dbReference type="HAMAP-Rule" id="MF_01043"/>
    </source>
</evidence>
<dbReference type="EC" id="2.3.1.275" evidence="1"/>
<dbReference type="EMBL" id="CP000733">
    <property type="protein sequence ID" value="ABS78175.1"/>
    <property type="molecule type" value="Genomic_DNA"/>
</dbReference>
<dbReference type="RefSeq" id="WP_005770791.1">
    <property type="nucleotide sequence ID" value="NC_009727.1"/>
</dbReference>
<dbReference type="SMR" id="A9KFT7"/>
<dbReference type="KEGG" id="cbd:CBUD_1323"/>
<dbReference type="HOGENOM" id="CLU_081254_0_0_6"/>
<dbReference type="UniPathway" id="UPA00085"/>
<dbReference type="Proteomes" id="UP000008555">
    <property type="component" value="Chromosome"/>
</dbReference>
<dbReference type="GO" id="GO:0005886">
    <property type="term" value="C:plasma membrane"/>
    <property type="evidence" value="ECO:0007669"/>
    <property type="project" value="UniProtKB-SubCell"/>
</dbReference>
<dbReference type="GO" id="GO:0043772">
    <property type="term" value="F:acyl-phosphate glycerol-3-phosphate acyltransferase activity"/>
    <property type="evidence" value="ECO:0007669"/>
    <property type="project" value="UniProtKB-UniRule"/>
</dbReference>
<dbReference type="GO" id="GO:0008654">
    <property type="term" value="P:phospholipid biosynthetic process"/>
    <property type="evidence" value="ECO:0007669"/>
    <property type="project" value="UniProtKB-UniRule"/>
</dbReference>
<dbReference type="HAMAP" id="MF_01043">
    <property type="entry name" value="PlsY"/>
    <property type="match status" value="1"/>
</dbReference>
<dbReference type="InterPro" id="IPR003811">
    <property type="entry name" value="G3P_acylTferase_PlsY"/>
</dbReference>
<dbReference type="NCBIfam" id="TIGR00023">
    <property type="entry name" value="glycerol-3-phosphate 1-O-acyltransferase PlsY"/>
    <property type="match status" value="1"/>
</dbReference>
<dbReference type="PANTHER" id="PTHR30309:SF0">
    <property type="entry name" value="GLYCEROL-3-PHOSPHATE ACYLTRANSFERASE-RELATED"/>
    <property type="match status" value="1"/>
</dbReference>
<dbReference type="PANTHER" id="PTHR30309">
    <property type="entry name" value="INNER MEMBRANE PROTEIN YGIH"/>
    <property type="match status" value="1"/>
</dbReference>
<dbReference type="Pfam" id="PF02660">
    <property type="entry name" value="G3P_acyltransf"/>
    <property type="match status" value="1"/>
</dbReference>
<dbReference type="SMART" id="SM01207">
    <property type="entry name" value="G3P_acyltransf"/>
    <property type="match status" value="1"/>
</dbReference>
<protein>
    <recommendedName>
        <fullName evidence="1">Glycerol-3-phosphate acyltransferase</fullName>
    </recommendedName>
    <alternativeName>
        <fullName evidence="1">Acyl-PO4 G3P acyltransferase</fullName>
    </alternativeName>
    <alternativeName>
        <fullName evidence="1">Acyl-phosphate--glycerol-3-phosphate acyltransferase</fullName>
    </alternativeName>
    <alternativeName>
        <fullName evidence="1">G3P acyltransferase</fullName>
        <shortName evidence="1">GPAT</shortName>
        <ecNumber evidence="1">2.3.1.275</ecNumber>
    </alternativeName>
    <alternativeName>
        <fullName evidence="1">Lysophosphatidic acid synthase</fullName>
        <shortName evidence="1">LPA synthase</shortName>
    </alternativeName>
</protein>
<proteinExistence type="inferred from homology"/>
<accession>A9KFT7</accession>
<gene>
    <name evidence="1" type="primary">plsY</name>
    <name type="ordered locus">CBUD_1323</name>
</gene>
<organism>
    <name type="scientific">Coxiella burnetii (strain Dugway 5J108-111)</name>
    <dbReference type="NCBI Taxonomy" id="434922"/>
    <lineage>
        <taxon>Bacteria</taxon>
        <taxon>Pseudomonadati</taxon>
        <taxon>Pseudomonadota</taxon>
        <taxon>Gammaproteobacteria</taxon>
        <taxon>Legionellales</taxon>
        <taxon>Coxiellaceae</taxon>
        <taxon>Coxiella</taxon>
    </lineage>
</organism>
<reference key="1">
    <citation type="journal article" date="2009" name="Infect. Immun.">
        <title>Comparative genomics reveal extensive transposon-mediated genomic plasticity and diversity among potential effector proteins within the genus Coxiella.</title>
        <authorList>
            <person name="Beare P.A."/>
            <person name="Unsworth N."/>
            <person name="Andoh M."/>
            <person name="Voth D.E."/>
            <person name="Omsland A."/>
            <person name="Gilk S.D."/>
            <person name="Williams K.P."/>
            <person name="Sobral B.W."/>
            <person name="Kupko J.J. III"/>
            <person name="Porcella S.F."/>
            <person name="Samuel J.E."/>
            <person name="Heinzen R.A."/>
        </authorList>
    </citation>
    <scope>NUCLEOTIDE SEQUENCE [LARGE SCALE GENOMIC DNA]</scope>
    <source>
        <strain>Dugway 5J108-111</strain>
    </source>
</reference>
<comment type="function">
    <text evidence="1">Catalyzes the transfer of an acyl group from acyl-phosphate (acyl-PO(4)) to glycerol-3-phosphate (G3P) to form lysophosphatidic acid (LPA). This enzyme utilizes acyl-phosphate as fatty acyl donor, but not acyl-CoA or acyl-ACP.</text>
</comment>
<comment type="catalytic activity">
    <reaction evidence="1">
        <text>an acyl phosphate + sn-glycerol 3-phosphate = a 1-acyl-sn-glycero-3-phosphate + phosphate</text>
        <dbReference type="Rhea" id="RHEA:34075"/>
        <dbReference type="ChEBI" id="CHEBI:43474"/>
        <dbReference type="ChEBI" id="CHEBI:57597"/>
        <dbReference type="ChEBI" id="CHEBI:57970"/>
        <dbReference type="ChEBI" id="CHEBI:59918"/>
        <dbReference type="EC" id="2.3.1.275"/>
    </reaction>
</comment>
<comment type="pathway">
    <text evidence="1">Lipid metabolism; phospholipid metabolism.</text>
</comment>
<comment type="subunit">
    <text evidence="1">Probably interacts with PlsX.</text>
</comment>
<comment type="subcellular location">
    <subcellularLocation>
        <location evidence="1">Cell inner membrane</location>
        <topology evidence="1">Multi-pass membrane protein</topology>
    </subcellularLocation>
</comment>
<comment type="similarity">
    <text evidence="1">Belongs to the PlsY family.</text>
</comment>
<feature type="chain" id="PRO_1000084382" description="Glycerol-3-phosphate acyltransferase">
    <location>
        <begin position="1"/>
        <end position="193"/>
    </location>
</feature>
<feature type="transmembrane region" description="Helical" evidence="1">
    <location>
        <begin position="2"/>
        <end position="22"/>
    </location>
</feature>
<feature type="transmembrane region" description="Helical" evidence="1">
    <location>
        <begin position="51"/>
        <end position="71"/>
    </location>
</feature>
<feature type="transmembrane region" description="Helical" evidence="1">
    <location>
        <begin position="78"/>
        <end position="98"/>
    </location>
</feature>
<feature type="transmembrane region" description="Helical" evidence="1">
    <location>
        <begin position="112"/>
        <end position="132"/>
    </location>
</feature>
<feature type="transmembrane region" description="Helical" evidence="1">
    <location>
        <begin position="154"/>
        <end position="174"/>
    </location>
</feature>